<accession>P85144</accession>
<dbReference type="SMR" id="P85144"/>
<dbReference type="ArachnoServer" id="AS000042">
    <property type="toxin name" value="U4-ctenitoxin-Co1c"/>
</dbReference>
<dbReference type="GO" id="GO:0005576">
    <property type="term" value="C:extracellular region"/>
    <property type="evidence" value="ECO:0007669"/>
    <property type="project" value="UniProtKB-SubCell"/>
</dbReference>
<dbReference type="GO" id="GO:0090729">
    <property type="term" value="F:toxin activity"/>
    <property type="evidence" value="ECO:0007669"/>
    <property type="project" value="InterPro"/>
</dbReference>
<dbReference type="InterPro" id="IPR013605">
    <property type="entry name" value="Toxin_34"/>
</dbReference>
<dbReference type="Pfam" id="PF08396">
    <property type="entry name" value="Toxin_34"/>
    <property type="match status" value="1"/>
</dbReference>
<feature type="chain" id="PRO_0000287678" description="U4-ctenitoxin-Co1c">
    <location>
        <begin position="1"/>
        <end position="40" status="greater than"/>
    </location>
</feature>
<feature type="disulfide bond" evidence="3">
    <location>
        <begin position="3"/>
        <end position="20"/>
    </location>
</feature>
<feature type="disulfide bond" evidence="3">
    <location>
        <begin position="10"/>
        <end position="26"/>
    </location>
</feature>
<feature type="disulfide bond" evidence="3">
    <location>
        <begin position="19"/>
        <end position="40"/>
    </location>
</feature>
<feature type="disulfide bond" evidence="3">
    <location>
        <begin position="28"/>
        <end position="38"/>
    </location>
</feature>
<feature type="non-terminal residue" evidence="2">
    <location>
        <position position="40"/>
    </location>
</feature>
<protein>
    <recommendedName>
        <fullName>U4-ctenitoxin-Co1c</fullName>
        <shortName>U4-CNTX-Co1c</shortName>
    </recommendedName>
    <alternativeName>
        <fullName>Venom protein Oct F30-12</fullName>
    </alternativeName>
</protein>
<proteinExistence type="evidence at protein level"/>
<reference evidence="3" key="1">
    <citation type="submission" date="2007-04" db="UniProtKB">
        <title>Protein Oct F30-12 from venom of spider Oligoctenus ornatus has strong sequence similarities with PNTx3-4 type neurotoxins from Phoneutria spiders.</title>
        <authorList>
            <person name="Borges M.H."/>
            <person name="Oliveira C.F.B."/>
            <person name="Goncalves J.M."/>
            <person name="Rates B."/>
            <person name="Santos D.M."/>
            <person name="Pimenta A.M.C."/>
            <person name="Cordeiro M.N."/>
            <person name="Richardson M."/>
        </authorList>
    </citation>
    <scope>PROTEIN SEQUENCE</scope>
    <scope>SUBCELLULAR LOCATION</scope>
    <scope>TISSUE SPECIFICITY</scope>
    <scope>MASS SPECTROMETRY</scope>
    <source>
        <tissue evidence="1">Venom</tissue>
    </source>
</reference>
<comment type="function">
    <text evidence="1">Not toxic to mice by intracerebroventricular injection.</text>
</comment>
<comment type="subcellular location">
    <subcellularLocation>
        <location evidence="1">Secreted</location>
    </subcellularLocation>
</comment>
<comment type="tissue specificity">
    <text evidence="1">Expressed by the venom gland.</text>
</comment>
<comment type="domain">
    <text evidence="3">The presence of a 'disulfide through disulfide knot' structurally defines this protein as a knottin.</text>
</comment>
<comment type="mass spectrometry" mass="8325.89" error="0.09" method="Electrospray" evidence="1"/>
<comment type="similarity">
    <text evidence="3">Belongs to the neurotoxin 04 (omega-agtx) family. 03 (type II/III omega-agtx) subfamily.</text>
</comment>
<sequence length="40" mass="4359">GGCINHGQPCDGDKNDCQCCRDNGYCNCDGIFGLKWNCKC</sequence>
<keyword id="KW-0903">Direct protein sequencing</keyword>
<keyword id="KW-1015">Disulfide bond</keyword>
<keyword id="KW-0960">Knottin</keyword>
<keyword id="KW-0964">Secreted</keyword>
<evidence type="ECO:0000269" key="1">
    <source ref="1"/>
</evidence>
<evidence type="ECO:0000303" key="2">
    <source ref="1"/>
</evidence>
<evidence type="ECO:0000305" key="3"/>
<organism>
    <name type="scientific">Ctenus ornatus</name>
    <name type="common">Brazilian spider</name>
    <name type="synonym">Oligoctenus ornatus</name>
    <dbReference type="NCBI Taxonomy" id="406443"/>
    <lineage>
        <taxon>Eukaryota</taxon>
        <taxon>Metazoa</taxon>
        <taxon>Ecdysozoa</taxon>
        <taxon>Arthropoda</taxon>
        <taxon>Chelicerata</taxon>
        <taxon>Arachnida</taxon>
        <taxon>Araneae</taxon>
        <taxon>Araneomorphae</taxon>
        <taxon>Entelegynae</taxon>
        <taxon>Lycosoidea</taxon>
        <taxon>Ctenidae</taxon>
        <taxon>Oligoctenus</taxon>
    </lineage>
</organism>
<name>F3012_CTEON</name>